<feature type="signal peptide" evidence="1">
    <location>
        <begin position="1"/>
        <end position="24"/>
    </location>
</feature>
<feature type="chain" id="PRO_5000284430" description="Kunitz-type serine protease inhibitor C4">
    <location>
        <begin position="25"/>
        <end position="84"/>
    </location>
</feature>
<feature type="propeptide" id="PRO_0000377468" evidence="2">
    <location>
        <begin position="85"/>
        <end position="90"/>
    </location>
</feature>
<feature type="domain" description="BPTI/Kunitz inhibitor" evidence="3">
    <location>
        <begin position="31"/>
        <end position="81"/>
    </location>
</feature>
<feature type="site" description="Reactive bond for chymotrypsin" evidence="1">
    <location>
        <begin position="41"/>
        <end position="42"/>
    </location>
</feature>
<feature type="disulfide bond" evidence="3">
    <location>
        <begin position="31"/>
        <end position="81"/>
    </location>
</feature>
<feature type="disulfide bond" evidence="3">
    <location>
        <begin position="40"/>
        <end position="64"/>
    </location>
</feature>
<feature type="disulfide bond" evidence="3">
    <location>
        <begin position="56"/>
        <end position="77"/>
    </location>
</feature>
<accession>A8Y7N7</accession>
<evidence type="ECO:0000250" key="1"/>
<evidence type="ECO:0000255" key="2"/>
<evidence type="ECO:0000255" key="3">
    <source>
        <dbReference type="PROSITE-ProRule" id="PRU00031"/>
    </source>
</evidence>
<evidence type="ECO:0000305" key="4"/>
<keyword id="KW-0165">Cleavage on pair of basic residues</keyword>
<keyword id="KW-1015">Disulfide bond</keyword>
<keyword id="KW-0646">Protease inhibitor</keyword>
<keyword id="KW-0964">Secreted</keyword>
<keyword id="KW-0722">Serine protease inhibitor</keyword>
<keyword id="KW-0732">Signal</keyword>
<name>VKTC4_DABSI</name>
<protein>
    <recommendedName>
        <fullName>Kunitz-type serine protease inhibitor C4</fullName>
    </recommendedName>
    <alternativeName>
        <fullName>BPTI-4</fullName>
    </alternativeName>
    <alternativeName>
        <fullName>Trypsin inhibitor 4</fullName>
    </alternativeName>
    <alternativeName>
        <fullName>Trypsin inhibitor C4</fullName>
    </alternativeName>
</protein>
<reference key="1">
    <citation type="submission" date="2006-11" db="EMBL/GenBank/DDBJ databases">
        <title>BPTI petides from Chinese Daboia russellii siamensis.</title>
        <authorList>
            <person name="Guo C."/>
            <person name="McClean S."/>
            <person name="Shaw C."/>
            <person name="Rao P."/>
            <person name="Ye M."/>
            <person name="Anthony John B."/>
        </authorList>
    </citation>
    <scope>NUCLEOTIDE SEQUENCE [MRNA]</scope>
    <source>
        <strain>China</strain>
        <tissue>Venom gland</tissue>
    </source>
</reference>
<comment type="function">
    <text evidence="1">Serine protease inhibitor.</text>
</comment>
<comment type="subcellular location">
    <subcellularLocation>
        <location evidence="1">Secreted</location>
    </subcellularLocation>
</comment>
<comment type="tissue specificity">
    <text>Expressed by the venom gland.</text>
</comment>
<comment type="similarity">
    <text evidence="4">Belongs to the venom Kunitz-type family.</text>
</comment>
<dbReference type="EMBL" id="AM411364">
    <property type="protein sequence ID" value="CAL69605.1"/>
    <property type="molecule type" value="mRNA"/>
</dbReference>
<dbReference type="SMR" id="A8Y7N7"/>
<dbReference type="GO" id="GO:0005615">
    <property type="term" value="C:extracellular space"/>
    <property type="evidence" value="ECO:0007669"/>
    <property type="project" value="TreeGrafter"/>
</dbReference>
<dbReference type="GO" id="GO:0004867">
    <property type="term" value="F:serine-type endopeptidase inhibitor activity"/>
    <property type="evidence" value="ECO:0007669"/>
    <property type="project" value="UniProtKB-KW"/>
</dbReference>
<dbReference type="CDD" id="cd22608">
    <property type="entry name" value="Kunitz_PPTI-like"/>
    <property type="match status" value="1"/>
</dbReference>
<dbReference type="FunFam" id="4.10.410.10:FF:000021">
    <property type="entry name" value="Serine protease inhibitor, putative"/>
    <property type="match status" value="1"/>
</dbReference>
<dbReference type="Gene3D" id="4.10.410.10">
    <property type="entry name" value="Pancreatic trypsin inhibitor Kunitz domain"/>
    <property type="match status" value="1"/>
</dbReference>
<dbReference type="InterPro" id="IPR002223">
    <property type="entry name" value="Kunitz_BPTI"/>
</dbReference>
<dbReference type="InterPro" id="IPR036880">
    <property type="entry name" value="Kunitz_BPTI_sf"/>
</dbReference>
<dbReference type="InterPro" id="IPR020901">
    <property type="entry name" value="Prtase_inh_Kunz-CS"/>
</dbReference>
<dbReference type="InterPro" id="IPR050098">
    <property type="entry name" value="TFPI/VKTCI-like"/>
</dbReference>
<dbReference type="PANTHER" id="PTHR10083">
    <property type="entry name" value="KUNITZ-TYPE PROTEASE INHIBITOR-RELATED"/>
    <property type="match status" value="1"/>
</dbReference>
<dbReference type="PANTHER" id="PTHR10083:SF376">
    <property type="entry name" value="SERINE PEPTIDASE INHIBITOR, KUNITZ TYPE, 3"/>
    <property type="match status" value="1"/>
</dbReference>
<dbReference type="Pfam" id="PF00014">
    <property type="entry name" value="Kunitz_BPTI"/>
    <property type="match status" value="1"/>
</dbReference>
<dbReference type="PRINTS" id="PR00759">
    <property type="entry name" value="BASICPTASE"/>
</dbReference>
<dbReference type="SMART" id="SM00131">
    <property type="entry name" value="KU"/>
    <property type="match status" value="1"/>
</dbReference>
<dbReference type="SUPFAM" id="SSF57362">
    <property type="entry name" value="BPTI-like"/>
    <property type="match status" value="1"/>
</dbReference>
<dbReference type="PROSITE" id="PS00280">
    <property type="entry name" value="BPTI_KUNITZ_1"/>
    <property type="match status" value="1"/>
</dbReference>
<dbReference type="PROSITE" id="PS50279">
    <property type="entry name" value="BPTI_KUNITZ_2"/>
    <property type="match status" value="1"/>
</dbReference>
<sequence length="90" mass="10162">MSSGGLLLLLGLLTLWAELTPISGHDRPKFCYLPADPGECMAYIRSFYYDSESKKCKEFIYGGCHGNANNFPTRDKCRQTCRAPRKGRHT</sequence>
<organism>
    <name type="scientific">Daboia siamensis</name>
    <name type="common">Eastern Russel's viper</name>
    <name type="synonym">Daboia russelii siamensis</name>
    <dbReference type="NCBI Taxonomy" id="343250"/>
    <lineage>
        <taxon>Eukaryota</taxon>
        <taxon>Metazoa</taxon>
        <taxon>Chordata</taxon>
        <taxon>Craniata</taxon>
        <taxon>Vertebrata</taxon>
        <taxon>Euteleostomi</taxon>
        <taxon>Lepidosauria</taxon>
        <taxon>Squamata</taxon>
        <taxon>Bifurcata</taxon>
        <taxon>Unidentata</taxon>
        <taxon>Episquamata</taxon>
        <taxon>Toxicofera</taxon>
        <taxon>Serpentes</taxon>
        <taxon>Colubroidea</taxon>
        <taxon>Viperidae</taxon>
        <taxon>Viperinae</taxon>
        <taxon>Daboia</taxon>
    </lineage>
</organism>
<proteinExistence type="evidence at transcript level"/>